<reference key="1">
    <citation type="journal article" date="2002" name="Nature">
        <title>The genome sequence of Schizosaccharomyces pombe.</title>
        <authorList>
            <person name="Wood V."/>
            <person name="Gwilliam R."/>
            <person name="Rajandream M.A."/>
            <person name="Lyne M.H."/>
            <person name="Lyne R."/>
            <person name="Stewart A."/>
            <person name="Sgouros J.G."/>
            <person name="Peat N."/>
            <person name="Hayles J."/>
            <person name="Baker S.G."/>
            <person name="Basham D."/>
            <person name="Bowman S."/>
            <person name="Brooks K."/>
            <person name="Brown D."/>
            <person name="Brown S."/>
            <person name="Chillingworth T."/>
            <person name="Churcher C.M."/>
            <person name="Collins M."/>
            <person name="Connor R."/>
            <person name="Cronin A."/>
            <person name="Davis P."/>
            <person name="Feltwell T."/>
            <person name="Fraser A."/>
            <person name="Gentles S."/>
            <person name="Goble A."/>
            <person name="Hamlin N."/>
            <person name="Harris D.E."/>
            <person name="Hidalgo J."/>
            <person name="Hodgson G."/>
            <person name="Holroyd S."/>
            <person name="Hornsby T."/>
            <person name="Howarth S."/>
            <person name="Huckle E.J."/>
            <person name="Hunt S."/>
            <person name="Jagels K."/>
            <person name="James K.D."/>
            <person name="Jones L."/>
            <person name="Jones M."/>
            <person name="Leather S."/>
            <person name="McDonald S."/>
            <person name="McLean J."/>
            <person name="Mooney P."/>
            <person name="Moule S."/>
            <person name="Mungall K.L."/>
            <person name="Murphy L.D."/>
            <person name="Niblett D."/>
            <person name="Odell C."/>
            <person name="Oliver K."/>
            <person name="O'Neil S."/>
            <person name="Pearson D."/>
            <person name="Quail M.A."/>
            <person name="Rabbinowitsch E."/>
            <person name="Rutherford K.M."/>
            <person name="Rutter S."/>
            <person name="Saunders D."/>
            <person name="Seeger K."/>
            <person name="Sharp S."/>
            <person name="Skelton J."/>
            <person name="Simmonds M.N."/>
            <person name="Squares R."/>
            <person name="Squares S."/>
            <person name="Stevens K."/>
            <person name="Taylor K."/>
            <person name="Taylor R.G."/>
            <person name="Tivey A."/>
            <person name="Walsh S.V."/>
            <person name="Warren T."/>
            <person name="Whitehead S."/>
            <person name="Woodward J.R."/>
            <person name="Volckaert G."/>
            <person name="Aert R."/>
            <person name="Robben J."/>
            <person name="Grymonprez B."/>
            <person name="Weltjens I."/>
            <person name="Vanstreels E."/>
            <person name="Rieger M."/>
            <person name="Schaefer M."/>
            <person name="Mueller-Auer S."/>
            <person name="Gabel C."/>
            <person name="Fuchs M."/>
            <person name="Duesterhoeft A."/>
            <person name="Fritzc C."/>
            <person name="Holzer E."/>
            <person name="Moestl D."/>
            <person name="Hilbert H."/>
            <person name="Borzym K."/>
            <person name="Langer I."/>
            <person name="Beck A."/>
            <person name="Lehrach H."/>
            <person name="Reinhardt R."/>
            <person name="Pohl T.M."/>
            <person name="Eger P."/>
            <person name="Zimmermann W."/>
            <person name="Wedler H."/>
            <person name="Wambutt R."/>
            <person name="Purnelle B."/>
            <person name="Goffeau A."/>
            <person name="Cadieu E."/>
            <person name="Dreano S."/>
            <person name="Gloux S."/>
            <person name="Lelaure V."/>
            <person name="Mottier S."/>
            <person name="Galibert F."/>
            <person name="Aves S.J."/>
            <person name="Xiang Z."/>
            <person name="Hunt C."/>
            <person name="Moore K."/>
            <person name="Hurst S.M."/>
            <person name="Lucas M."/>
            <person name="Rochet M."/>
            <person name="Gaillardin C."/>
            <person name="Tallada V.A."/>
            <person name="Garzon A."/>
            <person name="Thode G."/>
            <person name="Daga R.R."/>
            <person name="Cruzado L."/>
            <person name="Jimenez J."/>
            <person name="Sanchez M."/>
            <person name="del Rey F."/>
            <person name="Benito J."/>
            <person name="Dominguez A."/>
            <person name="Revuelta J.L."/>
            <person name="Moreno S."/>
            <person name="Armstrong J."/>
            <person name="Forsburg S.L."/>
            <person name="Cerutti L."/>
            <person name="Lowe T."/>
            <person name="McCombie W.R."/>
            <person name="Paulsen I."/>
            <person name="Potashkin J."/>
            <person name="Shpakovski G.V."/>
            <person name="Ussery D."/>
            <person name="Barrell B.G."/>
            <person name="Nurse P."/>
        </authorList>
    </citation>
    <scope>NUCLEOTIDE SEQUENCE [LARGE SCALE GENOMIC DNA]</scope>
    <source>
        <strain>972 / ATCC 24843</strain>
    </source>
</reference>
<sequence length="405" mass="45806">MASRYRVEYALKQHRKDDFIEWIKGLLSVPFVLQAGTPSQKLVTREKEQETLERYAVILRDVEKLIEAHIQIVSEGGSYSQLKMLVPSITIFWTPLPLVKAMYALEPKLCLAKRSFVAPSFNDVRAILGGAQLNYLADNGLDMVSFDGDVTLYEDGQPLLPDNPVISRLIQLLSRGIYVIILTAAGYPSRTGQEYTDRFSGLLQAIEDSDLKDGQKRKLHVLGGESNYLFAYDPLHGLQWVDADSWMLPVMKTWPHDEILEILDTAEETLRSCIQGLNIDAKIVRKERSVGFVPSLGQKLRREQLEEAVLETQATLQIRNFSVPFTAFNGGNDIWCDIGDKKLGVLCLQHFFNISHPSRCLHVGDQFLSAGNNDYKARAAATTVWVSSPHETIEFLDYYFSFLKK</sequence>
<comment type="function">
    <text evidence="2">IMP-specific 5'-nucleotidase involved in IMP (inositol monophosphate) degradation.</text>
</comment>
<comment type="catalytic activity">
    <reaction evidence="2">
        <text>IMP + H2O = inosine + phosphate</text>
        <dbReference type="Rhea" id="RHEA:27718"/>
        <dbReference type="ChEBI" id="CHEBI:15377"/>
        <dbReference type="ChEBI" id="CHEBI:17596"/>
        <dbReference type="ChEBI" id="CHEBI:43474"/>
        <dbReference type="ChEBI" id="CHEBI:58053"/>
        <dbReference type="EC" id="3.1.3.99"/>
    </reaction>
</comment>
<comment type="cofactor">
    <cofactor evidence="2">
        <name>Mg(2+)</name>
        <dbReference type="ChEBI" id="CHEBI:18420"/>
    </cofactor>
</comment>
<comment type="activity regulation">
    <text evidence="1 2">Allosterically activated by ATP (By similarity). ATP binding is a prerequisite to magnesium and substrate binding. ATP binds to 2 of the subunits in the homotetramer inducing a closure of these 2 subunits and the release of the C-terminal loop, thereby activating the enzyme (By similarity).</text>
</comment>
<comment type="subunit">
    <text evidence="2">Homotetramer.</text>
</comment>
<comment type="similarity">
    <text evidence="3">Belongs to the ISN1 family.</text>
</comment>
<gene>
    <name type="primary">isn1</name>
    <name type="ORF">SPBC30D10.03c</name>
</gene>
<accession>O14349</accession>
<organism>
    <name type="scientific">Schizosaccharomyces pombe (strain 972 / ATCC 24843)</name>
    <name type="common">Fission yeast</name>
    <dbReference type="NCBI Taxonomy" id="284812"/>
    <lineage>
        <taxon>Eukaryota</taxon>
        <taxon>Fungi</taxon>
        <taxon>Dikarya</taxon>
        <taxon>Ascomycota</taxon>
        <taxon>Taphrinomycotina</taxon>
        <taxon>Schizosaccharomycetes</taxon>
        <taxon>Schizosaccharomycetales</taxon>
        <taxon>Schizosaccharomycetaceae</taxon>
        <taxon>Schizosaccharomyces</taxon>
    </lineage>
</organism>
<dbReference type="EC" id="3.1.3.99" evidence="2"/>
<dbReference type="EMBL" id="CU329671">
    <property type="protein sequence ID" value="CAB10798.1"/>
    <property type="molecule type" value="Genomic_DNA"/>
</dbReference>
<dbReference type="PIR" id="T40193">
    <property type="entry name" value="T40193"/>
</dbReference>
<dbReference type="RefSeq" id="NP_596282.1">
    <property type="nucleotide sequence ID" value="NM_001022203.2"/>
</dbReference>
<dbReference type="SMR" id="O14349"/>
<dbReference type="BioGRID" id="276873">
    <property type="interactions" value="11"/>
</dbReference>
<dbReference type="FunCoup" id="O14349">
    <property type="interactions" value="89"/>
</dbReference>
<dbReference type="STRING" id="284812.O14349"/>
<dbReference type="iPTMnet" id="O14349"/>
<dbReference type="SwissPalm" id="O14349"/>
<dbReference type="PaxDb" id="4896-SPBC30D10.03c.1"/>
<dbReference type="EnsemblFungi" id="SPBC30D10.03c.1">
    <property type="protein sequence ID" value="SPBC30D10.03c.1:pep"/>
    <property type="gene ID" value="SPBC30D10.03c"/>
</dbReference>
<dbReference type="GeneID" id="2540344"/>
<dbReference type="KEGG" id="spo:2540344"/>
<dbReference type="PomBase" id="SPBC30D10.03c">
    <property type="gene designation" value="isn1"/>
</dbReference>
<dbReference type="VEuPathDB" id="FungiDB:SPBC30D10.03c"/>
<dbReference type="eggNOG" id="ENOG502QR24">
    <property type="taxonomic scope" value="Eukaryota"/>
</dbReference>
<dbReference type="HOGENOM" id="CLU_031816_1_0_1"/>
<dbReference type="InParanoid" id="O14349"/>
<dbReference type="OMA" id="WGVLACQ"/>
<dbReference type="PhylomeDB" id="O14349"/>
<dbReference type="PRO" id="PR:O14349"/>
<dbReference type="Proteomes" id="UP000002485">
    <property type="component" value="Chromosome II"/>
</dbReference>
<dbReference type="GO" id="GO:0005829">
    <property type="term" value="C:cytosol"/>
    <property type="evidence" value="ECO:0007005"/>
    <property type="project" value="PomBase"/>
</dbReference>
<dbReference type="GO" id="GO:0005634">
    <property type="term" value="C:nucleus"/>
    <property type="evidence" value="ECO:0007005"/>
    <property type="project" value="PomBase"/>
</dbReference>
<dbReference type="GO" id="GO:0005524">
    <property type="term" value="F:ATP binding"/>
    <property type="evidence" value="ECO:0007669"/>
    <property type="project" value="UniProtKB-KW"/>
</dbReference>
<dbReference type="GO" id="GO:0050483">
    <property type="term" value="F:IMP 5'-nucleotidase activity"/>
    <property type="evidence" value="ECO:0000318"/>
    <property type="project" value="GO_Central"/>
</dbReference>
<dbReference type="GO" id="GO:0000287">
    <property type="term" value="F:magnesium ion binding"/>
    <property type="evidence" value="ECO:0007669"/>
    <property type="project" value="InterPro"/>
</dbReference>
<dbReference type="GO" id="GO:0006190">
    <property type="term" value="P:inosine salvage"/>
    <property type="evidence" value="ECO:0000318"/>
    <property type="project" value="GO_Central"/>
</dbReference>
<dbReference type="GO" id="GO:0071590">
    <property type="term" value="P:nicotinamide riboside biosynthetic process"/>
    <property type="evidence" value="ECO:0000318"/>
    <property type="project" value="GO_Central"/>
</dbReference>
<dbReference type="GO" id="GO:0071592">
    <property type="term" value="P:nicotinic acid riboside biosynthetic process"/>
    <property type="evidence" value="ECO:0000318"/>
    <property type="project" value="GO_Central"/>
</dbReference>
<dbReference type="GO" id="GO:0009117">
    <property type="term" value="P:nucleotide metabolic process"/>
    <property type="evidence" value="ECO:0007669"/>
    <property type="project" value="UniProtKB-KW"/>
</dbReference>
<dbReference type="InterPro" id="IPR036412">
    <property type="entry name" value="HAD-like_sf"/>
</dbReference>
<dbReference type="InterPro" id="IPR009453">
    <property type="entry name" value="ISN1"/>
</dbReference>
<dbReference type="PANTHER" id="PTHR28213">
    <property type="entry name" value="IMP-SPECIFIC 5'-NUCLEOTIDASE 1"/>
    <property type="match status" value="1"/>
</dbReference>
<dbReference type="PANTHER" id="PTHR28213:SF1">
    <property type="entry name" value="IMP-SPECIFIC 5'-NUCLEOTIDASE 1"/>
    <property type="match status" value="1"/>
</dbReference>
<dbReference type="Pfam" id="PF06437">
    <property type="entry name" value="ISN1"/>
    <property type="match status" value="1"/>
</dbReference>
<dbReference type="PIRSF" id="PIRSF028836">
    <property type="entry name" value="ISN1"/>
    <property type="match status" value="1"/>
</dbReference>
<dbReference type="SUPFAM" id="SSF56784">
    <property type="entry name" value="HAD-like"/>
    <property type="match status" value="1"/>
</dbReference>
<keyword id="KW-0067">ATP-binding</keyword>
<keyword id="KW-0378">Hydrolase</keyword>
<keyword id="KW-0460">Magnesium</keyword>
<keyword id="KW-0479">Metal-binding</keyword>
<keyword id="KW-0546">Nucleotide metabolism</keyword>
<keyword id="KW-0547">Nucleotide-binding</keyword>
<keyword id="KW-1185">Reference proteome</keyword>
<feature type="chain" id="PRO_0000084255" description="IMP-specific 5'-nucleotidase 1">
    <location>
        <begin position="1"/>
        <end position="405"/>
    </location>
</feature>
<feature type="active site" description="Nucleophile" evidence="1">
    <location>
        <position position="147"/>
    </location>
</feature>
<feature type="active site" description="Proton donor" evidence="1">
    <location>
        <position position="149"/>
    </location>
</feature>
<feature type="binding site" evidence="1">
    <location>
        <position position="108"/>
    </location>
    <ligand>
        <name>ATP</name>
        <dbReference type="ChEBI" id="CHEBI:30616"/>
        <note>allosteric activator</note>
    </ligand>
</feature>
<feature type="binding site" evidence="1">
    <location>
        <position position="147"/>
    </location>
    <ligand>
        <name>IMP</name>
        <dbReference type="ChEBI" id="CHEBI:58053"/>
    </ligand>
</feature>
<feature type="binding site" evidence="1">
    <location>
        <position position="147"/>
    </location>
    <ligand>
        <name>Mg(2+)</name>
        <dbReference type="ChEBI" id="CHEBI:18420"/>
    </ligand>
</feature>
<feature type="binding site" evidence="1">
    <location>
        <position position="149"/>
    </location>
    <ligand>
        <name>IMP</name>
        <dbReference type="ChEBI" id="CHEBI:58053"/>
    </ligand>
</feature>
<feature type="binding site" evidence="1">
    <location>
        <position position="149"/>
    </location>
    <ligand>
        <name>Mg(2+)</name>
        <dbReference type="ChEBI" id="CHEBI:18420"/>
    </ligand>
</feature>
<feature type="binding site" evidence="1">
    <location>
        <position position="155"/>
    </location>
    <ligand>
        <name>IMP</name>
        <dbReference type="ChEBI" id="CHEBI:58053"/>
    </ligand>
</feature>
<feature type="binding site" evidence="1">
    <location>
        <position position="183"/>
    </location>
    <ligand>
        <name>IMP</name>
        <dbReference type="ChEBI" id="CHEBI:58053"/>
    </ligand>
</feature>
<feature type="binding site" evidence="1">
    <location>
        <position position="333"/>
    </location>
    <ligand>
        <name>IMP</name>
        <dbReference type="ChEBI" id="CHEBI:58053"/>
    </ligand>
</feature>
<feature type="binding site" evidence="1">
    <location>
        <position position="341"/>
    </location>
    <ligand>
        <name>IMP</name>
        <dbReference type="ChEBI" id="CHEBI:58053"/>
    </ligand>
</feature>
<feature type="binding site" evidence="1">
    <location>
        <position position="365"/>
    </location>
    <ligand>
        <name>Mg(2+)</name>
        <dbReference type="ChEBI" id="CHEBI:18420"/>
    </ligand>
</feature>
<protein>
    <recommendedName>
        <fullName>IMP-specific 5'-nucleotidase 1</fullName>
        <ecNumber evidence="2">3.1.3.99</ecNumber>
    </recommendedName>
</protein>
<proteinExistence type="inferred from homology"/>
<evidence type="ECO:0000250" key="1">
    <source>
        <dbReference type="UniProtKB" id="A0A144A134"/>
    </source>
</evidence>
<evidence type="ECO:0000250" key="2">
    <source>
        <dbReference type="UniProtKB" id="Q99312"/>
    </source>
</evidence>
<evidence type="ECO:0000305" key="3"/>
<name>ISN1_SCHPO</name>